<keyword id="KW-0119">Carbohydrate metabolism</keyword>
<keyword id="KW-0210">Decarboxylase</keyword>
<keyword id="KW-0456">Lyase</keyword>
<keyword id="KW-0460">Magnesium</keyword>
<keyword id="KW-0479">Metal-binding</keyword>
<reference key="1">
    <citation type="journal article" date="2008" name="J. Bacteriol.">
        <title>Insights into the environmental resistance gene pool from the genome sequence of the multidrug-resistant environmental isolate Escherichia coli SMS-3-5.</title>
        <authorList>
            <person name="Fricke W.F."/>
            <person name="Wright M.S."/>
            <person name="Lindell A.H."/>
            <person name="Harkins D.M."/>
            <person name="Baker-Austin C."/>
            <person name="Ravel J."/>
            <person name="Stepanauskas R."/>
        </authorList>
    </citation>
    <scope>NUCLEOTIDE SEQUENCE [LARGE SCALE GENOMIC DNA]</scope>
    <source>
        <strain>SMS-3-5 / SECEC</strain>
    </source>
</reference>
<dbReference type="EC" id="4.1.1.85" evidence="1"/>
<dbReference type="EMBL" id="CP000970">
    <property type="protein sequence ID" value="ACB16128.1"/>
    <property type="molecule type" value="Genomic_DNA"/>
</dbReference>
<dbReference type="RefSeq" id="WP_000056760.1">
    <property type="nucleotide sequence ID" value="NC_010498.1"/>
</dbReference>
<dbReference type="SMR" id="B1LQL6"/>
<dbReference type="GeneID" id="75202430"/>
<dbReference type="KEGG" id="ecm:EcSMS35_4667"/>
<dbReference type="HOGENOM" id="CLU_081825_0_0_6"/>
<dbReference type="UniPathway" id="UPA00263">
    <property type="reaction ID" value="UER00378"/>
</dbReference>
<dbReference type="Proteomes" id="UP000007011">
    <property type="component" value="Chromosome"/>
</dbReference>
<dbReference type="GO" id="GO:0033982">
    <property type="term" value="F:3-dehydro-L-gulonate-6-phosphate decarboxylase activity"/>
    <property type="evidence" value="ECO:0007669"/>
    <property type="project" value="UniProtKB-EC"/>
</dbReference>
<dbReference type="GO" id="GO:0000287">
    <property type="term" value="F:magnesium ion binding"/>
    <property type="evidence" value="ECO:0007669"/>
    <property type="project" value="UniProtKB-UniRule"/>
</dbReference>
<dbReference type="GO" id="GO:0004590">
    <property type="term" value="F:orotidine-5'-phosphate decarboxylase activity"/>
    <property type="evidence" value="ECO:0007669"/>
    <property type="project" value="InterPro"/>
</dbReference>
<dbReference type="GO" id="GO:0006207">
    <property type="term" value="P:'de novo' pyrimidine nucleobase biosynthetic process"/>
    <property type="evidence" value="ECO:0007669"/>
    <property type="project" value="InterPro"/>
</dbReference>
<dbReference type="GO" id="GO:0019854">
    <property type="term" value="P:L-ascorbic acid catabolic process"/>
    <property type="evidence" value="ECO:0007669"/>
    <property type="project" value="UniProtKB-UniRule"/>
</dbReference>
<dbReference type="CDD" id="cd04726">
    <property type="entry name" value="KGPDC_HPS"/>
    <property type="match status" value="1"/>
</dbReference>
<dbReference type="FunFam" id="3.20.20.70:FF:000022">
    <property type="entry name" value="3-keto-L-gulonate-6-phosphate decarboxylase UlaD"/>
    <property type="match status" value="1"/>
</dbReference>
<dbReference type="Gene3D" id="3.20.20.70">
    <property type="entry name" value="Aldolase class I"/>
    <property type="match status" value="1"/>
</dbReference>
<dbReference type="HAMAP" id="MF_01267">
    <property type="entry name" value="UlaD"/>
    <property type="match status" value="1"/>
</dbReference>
<dbReference type="InterPro" id="IPR023942">
    <property type="entry name" value="3-keto-L-gulonate6Pdecase_UlaD"/>
</dbReference>
<dbReference type="InterPro" id="IPR013785">
    <property type="entry name" value="Aldolase_TIM"/>
</dbReference>
<dbReference type="InterPro" id="IPR041710">
    <property type="entry name" value="HPS/KGPDC"/>
</dbReference>
<dbReference type="InterPro" id="IPR001754">
    <property type="entry name" value="OMPdeCOase_dom"/>
</dbReference>
<dbReference type="InterPro" id="IPR011060">
    <property type="entry name" value="RibuloseP-bd_barrel"/>
</dbReference>
<dbReference type="NCBIfam" id="NF009832">
    <property type="entry name" value="PRK13306.1"/>
    <property type="match status" value="1"/>
</dbReference>
<dbReference type="PANTHER" id="PTHR35039">
    <property type="entry name" value="3-KETO-L-GULONATE-6-PHOSPHATE DECARBOXYLASE SGBH-RELATED"/>
    <property type="match status" value="1"/>
</dbReference>
<dbReference type="PANTHER" id="PTHR35039:SF3">
    <property type="entry name" value="3-KETO-L-GULONATE-6-PHOSPHATE DECARBOXYLASE SGBH-RELATED"/>
    <property type="match status" value="1"/>
</dbReference>
<dbReference type="Pfam" id="PF00215">
    <property type="entry name" value="OMPdecase"/>
    <property type="match status" value="1"/>
</dbReference>
<dbReference type="SMART" id="SM00934">
    <property type="entry name" value="OMPdecase"/>
    <property type="match status" value="1"/>
</dbReference>
<dbReference type="SUPFAM" id="SSF51366">
    <property type="entry name" value="Ribulose-phoshate binding barrel"/>
    <property type="match status" value="1"/>
</dbReference>
<organism>
    <name type="scientific">Escherichia coli (strain SMS-3-5 / SECEC)</name>
    <dbReference type="NCBI Taxonomy" id="439855"/>
    <lineage>
        <taxon>Bacteria</taxon>
        <taxon>Pseudomonadati</taxon>
        <taxon>Pseudomonadota</taxon>
        <taxon>Gammaproteobacteria</taxon>
        <taxon>Enterobacterales</taxon>
        <taxon>Enterobacteriaceae</taxon>
        <taxon>Escherichia</taxon>
    </lineage>
</organism>
<gene>
    <name evidence="1" type="primary">ulaD</name>
    <name type="ordered locus">EcSMS35_4667</name>
</gene>
<sequence length="216" mass="23649">MSLPMLQVALDNQTMDSAYETTRLIAEEVDIIEVGTILCVGEGVRAVRDLKALYPHKIVLADAKIADAGKILSRMCFEANADWVTVICCADINTAKGALDVAKEFNGDVQIELTGYWTWEQAQQWRDAGIQQVVYHRSRDAQAAGVAWGEADITAIKRLSDMGFKVTVTGGLALEDLPLFKGIPIHVFIAGRSIRDAASPVEAARQFKRSIAELWG</sequence>
<proteinExistence type="inferred from homology"/>
<name>ULAD_ECOSM</name>
<accession>B1LQL6</accession>
<evidence type="ECO:0000255" key="1">
    <source>
        <dbReference type="HAMAP-Rule" id="MF_01267"/>
    </source>
</evidence>
<feature type="chain" id="PRO_1000140116" description="3-keto-L-gulonate-6-phosphate decarboxylase UlaD">
    <location>
        <begin position="1"/>
        <end position="216"/>
    </location>
</feature>
<feature type="binding site" evidence="1">
    <location>
        <position position="11"/>
    </location>
    <ligand>
        <name>substrate</name>
    </ligand>
</feature>
<feature type="binding site" evidence="1">
    <location>
        <position position="33"/>
    </location>
    <ligand>
        <name>Mg(2+)</name>
        <dbReference type="ChEBI" id="CHEBI:18420"/>
    </ligand>
</feature>
<feature type="binding site" evidence="1">
    <location>
        <position position="62"/>
    </location>
    <ligand>
        <name>Mg(2+)</name>
        <dbReference type="ChEBI" id="CHEBI:18420"/>
    </ligand>
</feature>
<feature type="binding site" evidence="1">
    <location>
        <position position="192"/>
    </location>
    <ligand>
        <name>substrate</name>
    </ligand>
</feature>
<feature type="site" description="Transition state stabilizer" evidence="1">
    <location>
        <position position="64"/>
    </location>
</feature>
<feature type="site" description="Transition state stabilizer" evidence="1">
    <location>
        <position position="67"/>
    </location>
</feature>
<protein>
    <recommendedName>
        <fullName evidence="1">3-keto-L-gulonate-6-phosphate decarboxylase UlaD</fullName>
        <ecNumber evidence="1">4.1.1.85</ecNumber>
    </recommendedName>
    <alternativeName>
        <fullName evidence="1">3-dehydro-L-gulonate-6-phosphate decarboxylase</fullName>
    </alternativeName>
    <alternativeName>
        <fullName evidence="1">KGPDC</fullName>
    </alternativeName>
    <alternativeName>
        <fullName evidence="1">L-ascorbate utilization protein D</fullName>
    </alternativeName>
</protein>
<comment type="function">
    <text evidence="1">Catalyzes the decarboxylation of 3-keto-L-gulonate-6-P into L-xylulose-5-P. Is involved in the anaerobic L-ascorbate utilization.</text>
</comment>
<comment type="catalytic activity">
    <reaction evidence="1">
        <text>3-dehydro-L-gulonate 6-phosphate + H(+) = L-xylulose 5-phosphate + CO2</text>
        <dbReference type="Rhea" id="RHEA:14353"/>
        <dbReference type="ChEBI" id="CHEBI:15378"/>
        <dbReference type="ChEBI" id="CHEBI:16526"/>
        <dbReference type="ChEBI" id="CHEBI:57829"/>
        <dbReference type="ChEBI" id="CHEBI:58774"/>
        <dbReference type="EC" id="4.1.1.85"/>
    </reaction>
</comment>
<comment type="cofactor">
    <cofactor evidence="1">
        <name>Mg(2+)</name>
        <dbReference type="ChEBI" id="CHEBI:18420"/>
    </cofactor>
    <text evidence="1">Binds 1 Mg(2+) ion per subunit.</text>
</comment>
<comment type="pathway">
    <text evidence="1">Cofactor degradation; L-ascorbate degradation; D-xylulose 5-phosphate from L-ascorbate: step 2/4.</text>
</comment>
<comment type="subunit">
    <text evidence="1">Homodimer.</text>
</comment>
<comment type="induction">
    <text evidence="1">Induced by L-ascorbate. Repressed by UlaR.</text>
</comment>
<comment type="similarity">
    <text evidence="1">Belongs to the HPS/KGPDC family. KGPDC subfamily.</text>
</comment>